<name>G6PI_GLAP5</name>
<keyword id="KW-0963">Cytoplasm</keyword>
<keyword id="KW-0312">Gluconeogenesis</keyword>
<keyword id="KW-0324">Glycolysis</keyword>
<keyword id="KW-0413">Isomerase</keyword>
<keyword id="KW-1185">Reference proteome</keyword>
<organism>
    <name type="scientific">Glaesserella parasuis serovar 5 (strain SH0165)</name>
    <name type="common">Haemophilus parasuis</name>
    <dbReference type="NCBI Taxonomy" id="557723"/>
    <lineage>
        <taxon>Bacteria</taxon>
        <taxon>Pseudomonadati</taxon>
        <taxon>Pseudomonadota</taxon>
        <taxon>Gammaproteobacteria</taxon>
        <taxon>Pasteurellales</taxon>
        <taxon>Pasteurellaceae</taxon>
        <taxon>Glaesserella</taxon>
    </lineage>
</organism>
<accession>B8F632</accession>
<dbReference type="EC" id="5.3.1.9" evidence="1"/>
<dbReference type="EMBL" id="CP001321">
    <property type="protein sequence ID" value="ACL32784.1"/>
    <property type="molecule type" value="Genomic_DNA"/>
</dbReference>
<dbReference type="RefSeq" id="WP_015939653.1">
    <property type="nucleotide sequence ID" value="NC_011852.1"/>
</dbReference>
<dbReference type="SMR" id="B8F632"/>
<dbReference type="STRING" id="557723.HAPS_1175"/>
<dbReference type="KEGG" id="hap:HAPS_1175"/>
<dbReference type="HOGENOM" id="CLU_017947_3_1_6"/>
<dbReference type="UniPathway" id="UPA00109">
    <property type="reaction ID" value="UER00181"/>
</dbReference>
<dbReference type="UniPathway" id="UPA00138"/>
<dbReference type="Proteomes" id="UP000006743">
    <property type="component" value="Chromosome"/>
</dbReference>
<dbReference type="GO" id="GO:0005829">
    <property type="term" value="C:cytosol"/>
    <property type="evidence" value="ECO:0007669"/>
    <property type="project" value="TreeGrafter"/>
</dbReference>
<dbReference type="GO" id="GO:0097367">
    <property type="term" value="F:carbohydrate derivative binding"/>
    <property type="evidence" value="ECO:0007669"/>
    <property type="project" value="InterPro"/>
</dbReference>
<dbReference type="GO" id="GO:0004347">
    <property type="term" value="F:glucose-6-phosphate isomerase activity"/>
    <property type="evidence" value="ECO:0007669"/>
    <property type="project" value="UniProtKB-UniRule"/>
</dbReference>
<dbReference type="GO" id="GO:0048029">
    <property type="term" value="F:monosaccharide binding"/>
    <property type="evidence" value="ECO:0007669"/>
    <property type="project" value="TreeGrafter"/>
</dbReference>
<dbReference type="GO" id="GO:0006094">
    <property type="term" value="P:gluconeogenesis"/>
    <property type="evidence" value="ECO:0007669"/>
    <property type="project" value="UniProtKB-UniRule"/>
</dbReference>
<dbReference type="GO" id="GO:0051156">
    <property type="term" value="P:glucose 6-phosphate metabolic process"/>
    <property type="evidence" value="ECO:0007669"/>
    <property type="project" value="TreeGrafter"/>
</dbReference>
<dbReference type="GO" id="GO:0006096">
    <property type="term" value="P:glycolytic process"/>
    <property type="evidence" value="ECO:0007669"/>
    <property type="project" value="UniProtKB-UniRule"/>
</dbReference>
<dbReference type="CDD" id="cd05015">
    <property type="entry name" value="SIS_PGI_1"/>
    <property type="match status" value="1"/>
</dbReference>
<dbReference type="CDD" id="cd05016">
    <property type="entry name" value="SIS_PGI_2"/>
    <property type="match status" value="1"/>
</dbReference>
<dbReference type="FunFam" id="1.10.1390.10:FF:000001">
    <property type="entry name" value="Glucose-6-phosphate isomerase"/>
    <property type="match status" value="1"/>
</dbReference>
<dbReference type="FunFam" id="3.40.50.10490:FF:000004">
    <property type="entry name" value="Glucose-6-phosphate isomerase"/>
    <property type="match status" value="1"/>
</dbReference>
<dbReference type="Gene3D" id="1.10.1390.10">
    <property type="match status" value="1"/>
</dbReference>
<dbReference type="Gene3D" id="3.40.50.10490">
    <property type="entry name" value="Glucose-6-phosphate isomerase like protein, domain 1"/>
    <property type="match status" value="2"/>
</dbReference>
<dbReference type="HAMAP" id="MF_00473">
    <property type="entry name" value="G6P_isomerase"/>
    <property type="match status" value="1"/>
</dbReference>
<dbReference type="InterPro" id="IPR001672">
    <property type="entry name" value="G6P_Isomerase"/>
</dbReference>
<dbReference type="InterPro" id="IPR023096">
    <property type="entry name" value="G6P_Isomerase_C"/>
</dbReference>
<dbReference type="InterPro" id="IPR018189">
    <property type="entry name" value="Phosphoglucose_isomerase_CS"/>
</dbReference>
<dbReference type="InterPro" id="IPR046348">
    <property type="entry name" value="SIS_dom_sf"/>
</dbReference>
<dbReference type="InterPro" id="IPR035476">
    <property type="entry name" value="SIS_PGI_1"/>
</dbReference>
<dbReference type="InterPro" id="IPR035482">
    <property type="entry name" value="SIS_PGI_2"/>
</dbReference>
<dbReference type="NCBIfam" id="NF001211">
    <property type="entry name" value="PRK00179.1"/>
    <property type="match status" value="1"/>
</dbReference>
<dbReference type="PANTHER" id="PTHR11469">
    <property type="entry name" value="GLUCOSE-6-PHOSPHATE ISOMERASE"/>
    <property type="match status" value="1"/>
</dbReference>
<dbReference type="PANTHER" id="PTHR11469:SF1">
    <property type="entry name" value="GLUCOSE-6-PHOSPHATE ISOMERASE"/>
    <property type="match status" value="1"/>
</dbReference>
<dbReference type="Pfam" id="PF00342">
    <property type="entry name" value="PGI"/>
    <property type="match status" value="1"/>
</dbReference>
<dbReference type="PRINTS" id="PR00662">
    <property type="entry name" value="G6PISOMERASE"/>
</dbReference>
<dbReference type="SUPFAM" id="SSF53697">
    <property type="entry name" value="SIS domain"/>
    <property type="match status" value="1"/>
</dbReference>
<dbReference type="PROSITE" id="PS00765">
    <property type="entry name" value="P_GLUCOSE_ISOMERASE_1"/>
    <property type="match status" value="1"/>
</dbReference>
<dbReference type="PROSITE" id="PS00174">
    <property type="entry name" value="P_GLUCOSE_ISOMERASE_2"/>
    <property type="match status" value="1"/>
</dbReference>
<dbReference type="PROSITE" id="PS51463">
    <property type="entry name" value="P_GLUCOSE_ISOMERASE_3"/>
    <property type="match status" value="1"/>
</dbReference>
<gene>
    <name evidence="1" type="primary">pgi</name>
    <name type="ordered locus">HAPS_1175</name>
</gene>
<comment type="function">
    <text evidence="1">Catalyzes the reversible isomerization of glucose-6-phosphate to fructose-6-phosphate.</text>
</comment>
<comment type="catalytic activity">
    <reaction evidence="1">
        <text>alpha-D-glucose 6-phosphate = beta-D-fructose 6-phosphate</text>
        <dbReference type="Rhea" id="RHEA:11816"/>
        <dbReference type="ChEBI" id="CHEBI:57634"/>
        <dbReference type="ChEBI" id="CHEBI:58225"/>
        <dbReference type="EC" id="5.3.1.9"/>
    </reaction>
</comment>
<comment type="pathway">
    <text evidence="1">Carbohydrate biosynthesis; gluconeogenesis.</text>
</comment>
<comment type="pathway">
    <text evidence="1">Carbohydrate degradation; glycolysis; D-glyceraldehyde 3-phosphate and glycerone phosphate from D-glucose: step 2/4.</text>
</comment>
<comment type="subcellular location">
    <subcellularLocation>
        <location evidence="1">Cytoplasm</location>
    </subcellularLocation>
</comment>
<comment type="similarity">
    <text evidence="1">Belongs to the GPI family.</text>
</comment>
<proteinExistence type="inferred from homology"/>
<protein>
    <recommendedName>
        <fullName evidence="1">Glucose-6-phosphate isomerase</fullName>
        <shortName evidence="1">GPI</shortName>
        <ecNumber evidence="1">5.3.1.9</ecNumber>
    </recommendedName>
    <alternativeName>
        <fullName evidence="1">Phosphoglucose isomerase</fullName>
        <shortName evidence="1">PGI</shortName>
    </alternativeName>
    <alternativeName>
        <fullName evidence="1">Phosphohexose isomerase</fullName>
        <shortName evidence="1">PHI</shortName>
    </alternativeName>
</protein>
<evidence type="ECO:0000255" key="1">
    <source>
        <dbReference type="HAMAP-Rule" id="MF_00473"/>
    </source>
</evidence>
<reference key="1">
    <citation type="journal article" date="2009" name="J. Bacteriol.">
        <title>Complete genome sequence of Haemophilus parasuis SH0165.</title>
        <authorList>
            <person name="Yue M."/>
            <person name="Yang F."/>
            <person name="Yang J."/>
            <person name="Bei W."/>
            <person name="Cai X."/>
            <person name="Chen L."/>
            <person name="Dong J."/>
            <person name="Zhou R."/>
            <person name="Jin M."/>
            <person name="Jin Q."/>
            <person name="Chen H."/>
        </authorList>
    </citation>
    <scope>NUCLEOTIDE SEQUENCE [LARGE SCALE GENOMIC DNA]</scope>
    <source>
        <strain>SH0165</strain>
    </source>
</reference>
<sequence>MQNINPTQTFAWNALEQHKAENLTIPQLFNEDPKRFDKYSLRFEDQILVDFSKNAINQHTLALLRQLADECQVKSATYAMFNGEKINRTENRAVLHTALRNRSNTPVEVDGKNVMLEVNAVLAKMKGFCERVISGVSKGYTGKAITDVVNIGIGGSDLGPYMVTEALRPYKNHLTMHFVSNVDGTHIAETLAKINPETTLFLVASKTFTTQETMTNALSARQWLLDTAKDESAVAKHFVALSTNAKEVAKFGIDTENMFEFWDWVGGRYSLWSAIGLSIALSIGFEHFEQLLDGAHAMDKHFLNAPAEQNIPLTLALIGIWNNNFLGAESEAILPYDQYLHRFAAYFQQGNMESNGKYVGRDGKFVNYQTGPIIWGEPGTNGQHAFYQLIHQGTKLIPCDFIAPAQTHNPIGDHHPKLLSNFFAQTEALAFGKSKEVVEQEFLQAGTSLEEVVEIVPFKVFTGNKPTNSILVQKITPFTLGALIAMYEHKIFVQGVIFNIYSFDQWGVELGKQLANRILPELENNETITSHDSSTNGLINQFKLWKQ</sequence>
<feature type="chain" id="PRO_1000135532" description="Glucose-6-phosphate isomerase">
    <location>
        <begin position="1"/>
        <end position="547"/>
    </location>
</feature>
<feature type="active site" description="Proton donor" evidence="1">
    <location>
        <position position="353"/>
    </location>
</feature>
<feature type="active site" evidence="1">
    <location>
        <position position="384"/>
    </location>
</feature>
<feature type="active site" evidence="1">
    <location>
        <position position="512"/>
    </location>
</feature>